<proteinExistence type="inferred from homology"/>
<evidence type="ECO:0000255" key="1">
    <source>
        <dbReference type="HAMAP-Rule" id="MF_01051"/>
    </source>
</evidence>
<name>CAID_SALPC</name>
<sequence>MSESLHLTRNGPILEITLDRPKANAIDAKTSFAMGEAFLNFRDDPELRVAIITGGGEKFFSAGWDLKAAAEGEAPDADFGPGGFAGLTEIFDLDKPVIAAVNGYAFGGGFELALAADFIVCAENASFALPEAKLGIVPDSGGVLRLPKLLPPAIVNEMVMTGRRMSAEEALRWGIVNRVVSQSELMDSARELAQQLVNSAPLAIAALKEIYRATSEMPVEEGYRYIRSGVLKHYPSVLHSEDALEGPQAFAEKRDPVWKGR</sequence>
<feature type="chain" id="PRO_1000149625" description="Carnitinyl-CoA dehydratase">
    <location>
        <begin position="1"/>
        <end position="261"/>
    </location>
</feature>
<feature type="active site" description="Nucleophile" evidence="1">
    <location>
        <position position="111"/>
    </location>
</feature>
<feature type="active site" description="Proton acceptor" evidence="1">
    <location>
        <position position="131"/>
    </location>
</feature>
<comment type="function">
    <text evidence="1">Catalyzes the reversible dehydration of L-carnitinyl-CoA to crotonobetainyl-CoA.</text>
</comment>
<comment type="catalytic activity">
    <reaction evidence="1">
        <text>(R)-carnitinyl-CoA = crotonobetainyl-CoA + H2O</text>
        <dbReference type="Rhea" id="RHEA:28338"/>
        <dbReference type="ChEBI" id="CHEBI:15377"/>
        <dbReference type="ChEBI" id="CHEBI:60932"/>
        <dbReference type="ChEBI" id="CHEBI:60933"/>
        <dbReference type="EC" id="4.2.1.149"/>
    </reaction>
</comment>
<comment type="pathway">
    <text evidence="1">Amine and polyamine metabolism; carnitine metabolism.</text>
</comment>
<comment type="similarity">
    <text evidence="1">Belongs to the enoyl-CoA hydratase/isomerase family.</text>
</comment>
<gene>
    <name evidence="1" type="primary">caiD</name>
    <name type="ordered locus">SPC_0075</name>
</gene>
<organism>
    <name type="scientific">Salmonella paratyphi C (strain RKS4594)</name>
    <dbReference type="NCBI Taxonomy" id="476213"/>
    <lineage>
        <taxon>Bacteria</taxon>
        <taxon>Pseudomonadati</taxon>
        <taxon>Pseudomonadota</taxon>
        <taxon>Gammaproteobacteria</taxon>
        <taxon>Enterobacterales</taxon>
        <taxon>Enterobacteriaceae</taxon>
        <taxon>Salmonella</taxon>
    </lineage>
</organism>
<accession>C0Q4L2</accession>
<dbReference type="EC" id="4.2.1.149" evidence="1"/>
<dbReference type="EMBL" id="CP000857">
    <property type="protein sequence ID" value="ACN44267.1"/>
    <property type="molecule type" value="Genomic_DNA"/>
</dbReference>
<dbReference type="RefSeq" id="WP_000004376.1">
    <property type="nucleotide sequence ID" value="NC_012125.1"/>
</dbReference>
<dbReference type="SMR" id="C0Q4L2"/>
<dbReference type="KEGG" id="sei:SPC_0075"/>
<dbReference type="HOGENOM" id="CLU_009834_7_6_6"/>
<dbReference type="UniPathway" id="UPA00117"/>
<dbReference type="Proteomes" id="UP000001599">
    <property type="component" value="Chromosome"/>
</dbReference>
<dbReference type="GO" id="GO:0016836">
    <property type="term" value="F:hydro-lyase activity"/>
    <property type="evidence" value="ECO:0007669"/>
    <property type="project" value="UniProtKB-UniRule"/>
</dbReference>
<dbReference type="GO" id="GO:0008735">
    <property type="term" value="F:L-carnitine CoA-transferase activity"/>
    <property type="evidence" value="ECO:0007669"/>
    <property type="project" value="RHEA"/>
</dbReference>
<dbReference type="GO" id="GO:0009437">
    <property type="term" value="P:carnitine metabolic process"/>
    <property type="evidence" value="ECO:0007669"/>
    <property type="project" value="UniProtKB-UniRule"/>
</dbReference>
<dbReference type="GO" id="GO:0006635">
    <property type="term" value="P:fatty acid beta-oxidation"/>
    <property type="evidence" value="ECO:0007669"/>
    <property type="project" value="TreeGrafter"/>
</dbReference>
<dbReference type="CDD" id="cd06558">
    <property type="entry name" value="crotonase-like"/>
    <property type="match status" value="1"/>
</dbReference>
<dbReference type="FunFam" id="1.10.12.10:FF:000005">
    <property type="entry name" value="Carnitinyl-CoA dehydratase"/>
    <property type="match status" value="1"/>
</dbReference>
<dbReference type="FunFam" id="3.90.226.10:FF:000009">
    <property type="entry name" value="Carnitinyl-CoA dehydratase"/>
    <property type="match status" value="1"/>
</dbReference>
<dbReference type="Gene3D" id="3.90.226.10">
    <property type="entry name" value="2-enoyl-CoA Hydratase, Chain A, domain 1"/>
    <property type="match status" value="1"/>
</dbReference>
<dbReference type="Gene3D" id="1.10.12.10">
    <property type="entry name" value="Lyase 2-enoyl-coa Hydratase, Chain A, domain 2"/>
    <property type="match status" value="1"/>
</dbReference>
<dbReference type="HAMAP" id="MF_01051">
    <property type="entry name" value="CaiD"/>
    <property type="match status" value="1"/>
</dbReference>
<dbReference type="InterPro" id="IPR022852">
    <property type="entry name" value="Carnitinyl_CoA_dehydratase"/>
</dbReference>
<dbReference type="InterPro" id="IPR029045">
    <property type="entry name" value="ClpP/crotonase-like_dom_sf"/>
</dbReference>
<dbReference type="InterPro" id="IPR018376">
    <property type="entry name" value="Enoyl-CoA_hyd/isom_CS"/>
</dbReference>
<dbReference type="InterPro" id="IPR001753">
    <property type="entry name" value="Enoyl-CoA_hydra/iso"/>
</dbReference>
<dbReference type="InterPro" id="IPR014748">
    <property type="entry name" value="Enoyl-CoA_hydra_C"/>
</dbReference>
<dbReference type="NCBIfam" id="NF002936">
    <property type="entry name" value="PRK03580.1"/>
    <property type="match status" value="1"/>
</dbReference>
<dbReference type="PANTHER" id="PTHR11941:SF54">
    <property type="entry name" value="ENOYL-COA HYDRATASE, MITOCHONDRIAL"/>
    <property type="match status" value="1"/>
</dbReference>
<dbReference type="PANTHER" id="PTHR11941">
    <property type="entry name" value="ENOYL-COA HYDRATASE-RELATED"/>
    <property type="match status" value="1"/>
</dbReference>
<dbReference type="Pfam" id="PF00378">
    <property type="entry name" value="ECH_1"/>
    <property type="match status" value="1"/>
</dbReference>
<dbReference type="SUPFAM" id="SSF52096">
    <property type="entry name" value="ClpP/crotonase"/>
    <property type="match status" value="1"/>
</dbReference>
<dbReference type="PROSITE" id="PS00166">
    <property type="entry name" value="ENOYL_COA_HYDRATASE"/>
    <property type="match status" value="1"/>
</dbReference>
<keyword id="KW-0456">Lyase</keyword>
<reference key="1">
    <citation type="journal article" date="2009" name="PLoS ONE">
        <title>Salmonella paratyphi C: genetic divergence from Salmonella choleraesuis and pathogenic convergence with Salmonella typhi.</title>
        <authorList>
            <person name="Liu W.-Q."/>
            <person name="Feng Y."/>
            <person name="Wang Y."/>
            <person name="Zou Q.-H."/>
            <person name="Chen F."/>
            <person name="Guo J.-T."/>
            <person name="Peng Y.-H."/>
            <person name="Jin Y."/>
            <person name="Li Y.-G."/>
            <person name="Hu S.-N."/>
            <person name="Johnston R.N."/>
            <person name="Liu G.-R."/>
            <person name="Liu S.-L."/>
        </authorList>
    </citation>
    <scope>NUCLEOTIDE SEQUENCE [LARGE SCALE GENOMIC DNA]</scope>
    <source>
        <strain>RKS4594</strain>
    </source>
</reference>
<protein>
    <recommendedName>
        <fullName evidence="1">Carnitinyl-CoA dehydratase</fullName>
        <ecNumber evidence="1">4.2.1.149</ecNumber>
    </recommendedName>
    <alternativeName>
        <fullName evidence="1">Crotonobetainyl-CoA hydratase</fullName>
    </alternativeName>
</protein>